<proteinExistence type="inferred from homology"/>
<reference key="1">
    <citation type="journal article" date="2002" name="Nature">
        <title>Genome sequence and comparative analysis of the model rodent malaria parasite Plasmodium yoelii yoelii.</title>
        <authorList>
            <person name="Carlton J.M."/>
            <person name="Angiuoli S.V."/>
            <person name="Suh B.B."/>
            <person name="Kooij T.W."/>
            <person name="Pertea M."/>
            <person name="Silva J.C."/>
            <person name="Ermolaeva M.D."/>
            <person name="Allen J.E."/>
            <person name="Selengut J.D."/>
            <person name="Koo H.L."/>
            <person name="Peterson J.D."/>
            <person name="Pop M."/>
            <person name="Kosack D.S."/>
            <person name="Shumway M.F."/>
            <person name="Bidwell S.L."/>
            <person name="Shallom S.J."/>
            <person name="van Aken S.E."/>
            <person name="Riedmuller S.B."/>
            <person name="Feldblyum T.V."/>
            <person name="Cho J.K."/>
            <person name="Quackenbush J."/>
            <person name="Sedegah M."/>
            <person name="Shoaibi A."/>
            <person name="Cummings L.M."/>
            <person name="Florens L."/>
            <person name="Yates J.R. III"/>
            <person name="Raine J.D."/>
            <person name="Sinden R.E."/>
            <person name="Harris M.A."/>
            <person name="Cunningham D.A."/>
            <person name="Preiser P.R."/>
            <person name="Bergman L.W."/>
            <person name="Vaidya A.B."/>
            <person name="van Lin L.H."/>
            <person name="Janse C.J."/>
            <person name="Waters A.P."/>
            <person name="Smith H.O."/>
            <person name="White O.R."/>
            <person name="Salzberg S.L."/>
            <person name="Venter J.C."/>
            <person name="Fraser C.M."/>
            <person name="Hoffman S.L."/>
            <person name="Gardner M.J."/>
            <person name="Carucci D.J."/>
        </authorList>
    </citation>
    <scope>NUCLEOTIDE SEQUENCE [LARGE SCALE GENOMIC DNA]</scope>
    <source>
        <strain>17XNL</strain>
    </source>
</reference>
<organism>
    <name type="scientific">Plasmodium yoelii yoelii</name>
    <dbReference type="NCBI Taxonomy" id="73239"/>
    <lineage>
        <taxon>Eukaryota</taxon>
        <taxon>Sar</taxon>
        <taxon>Alveolata</taxon>
        <taxon>Apicomplexa</taxon>
        <taxon>Aconoidasida</taxon>
        <taxon>Haemosporida</taxon>
        <taxon>Plasmodiidae</taxon>
        <taxon>Plasmodium</taxon>
        <taxon>Plasmodium (Vinckeia)</taxon>
    </lineage>
</organism>
<sequence length="535" mass="62279">MGCNQSKSANDVRGNKVNNVNSKKKNNKREDINDGEEIAINPGMYVRKKEGKIGESYFKVRKLGSGAYGEVLLCKEKNGHSEKAIKVIKKSQFDKGRYNDDNKNIEKFHEEIYNEISLLKSLDHPNIIKLFDVFEDKKYFYLVTEFYEGGELFEQIINRHKFDECDAANIMKQILSGICYLHKHNIVHRDIKPENILLENKNSLLNIKIVDFGLSSFFSKDYKLRDRLGTAYYIAPEVLKKKYNEKCDVWSCGVIMYILLCGYPPFGGQNDQDIIKKVEKGKYYFDFNDWKNISDEAKELIKLMLTYDYNKRCTAEEALNSRWIKKYANNINKSDQKTLCGALSNMRKFEGSQKLAQAAILFIGSKLTTLEERKELTDIFKKLDKNGDGQLDKKELIEGYNVLRNFKNELGELKNVEEEVDNILKEVDFDKNGYIEYSEFISVCMDKQILFSEERLRRAFNLFDTDKSGKITKEELANVIIRGFYFFTYSLFGLTSVSEKTWNDVLGEADQNKDNMIDFDEFVSMMHKICDNKPF</sequence>
<gene>
    <name evidence="3" type="primary">CDPK1</name>
    <name type="synonym">CPK1</name>
    <name type="ORF">PY06527</name>
</gene>
<evidence type="ECO:0000250" key="1">
    <source>
        <dbReference type="UniProtKB" id="A0A2I0BVG8"/>
    </source>
</evidence>
<evidence type="ECO:0000250" key="2">
    <source>
        <dbReference type="UniProtKB" id="A0A509AHB6"/>
    </source>
</evidence>
<evidence type="ECO:0000250" key="3">
    <source>
        <dbReference type="UniProtKB" id="P62344"/>
    </source>
</evidence>
<evidence type="ECO:0000255" key="4">
    <source>
        <dbReference type="PROSITE-ProRule" id="PRU00159"/>
    </source>
</evidence>
<evidence type="ECO:0000255" key="5">
    <source>
        <dbReference type="PROSITE-ProRule" id="PRU00448"/>
    </source>
</evidence>
<evidence type="ECO:0000255" key="6">
    <source>
        <dbReference type="PROSITE-ProRule" id="PRU10027"/>
    </source>
</evidence>
<evidence type="ECO:0000256" key="7">
    <source>
        <dbReference type="SAM" id="MobiDB-lite"/>
    </source>
</evidence>
<comment type="function">
    <text evidence="2 3">Calcium-dependent protein kinase which acts as a sensor and effector of intracellular Ca(2+) levels probably in part downstream of cGMP-activated PKG kinase (By similarity). During the liver stage, involved in sporozoite motility and thus in sporozoite invasion of host hepatocytes, probably together with CDPK4 and CDPK5. In the mosquito midgut and during the last stage of male gamete exflagellation, may play a role in the rupture of the host erythrocyte membrane. In the mosquito midgut, required for the differentiation of the zygote into the ookinete by promoting the translational activation of a subset of repressed mRNAs; these mRNAs are kept repressed in the zygote by the DOZI- or CITH-containing mRNP complexes. Dispensable during the asexual blood stage (By similarity).</text>
</comment>
<comment type="catalytic activity">
    <reaction evidence="3">
        <text>L-seryl-[protein] + ATP = O-phospho-L-seryl-[protein] + ADP + H(+)</text>
        <dbReference type="Rhea" id="RHEA:17989"/>
        <dbReference type="Rhea" id="RHEA-COMP:9863"/>
        <dbReference type="Rhea" id="RHEA-COMP:11604"/>
        <dbReference type="ChEBI" id="CHEBI:15378"/>
        <dbReference type="ChEBI" id="CHEBI:29999"/>
        <dbReference type="ChEBI" id="CHEBI:30616"/>
        <dbReference type="ChEBI" id="CHEBI:83421"/>
        <dbReference type="ChEBI" id="CHEBI:456216"/>
        <dbReference type="EC" id="2.7.11.1"/>
    </reaction>
</comment>
<comment type="catalytic activity">
    <reaction evidence="3">
        <text>L-threonyl-[protein] + ATP = O-phospho-L-threonyl-[protein] + ADP + H(+)</text>
        <dbReference type="Rhea" id="RHEA:46608"/>
        <dbReference type="Rhea" id="RHEA-COMP:11060"/>
        <dbReference type="Rhea" id="RHEA-COMP:11605"/>
        <dbReference type="ChEBI" id="CHEBI:15378"/>
        <dbReference type="ChEBI" id="CHEBI:30013"/>
        <dbReference type="ChEBI" id="CHEBI:30616"/>
        <dbReference type="ChEBI" id="CHEBI:61977"/>
        <dbReference type="ChEBI" id="CHEBI:456216"/>
        <dbReference type="EC" id="2.7.11.1"/>
    </reaction>
</comment>
<comment type="cofactor">
    <cofactor evidence="3">
        <name>Mg(2+)</name>
        <dbReference type="ChEBI" id="CHEBI:18420"/>
    </cofactor>
</comment>
<comment type="activity regulation">
    <text evidence="3">Activated by calcium. Upon calcium binding to the EF-hand domains, the C-terminus of the junction domain (J domain) undergoes a conformational change which results in the dissociation of the pseudo-substrate inhibitory motif from the catalytic domain. This, in turn may facilitate the autophosphorylation of the activation loop at Thr-230, which leads to the kinase activation.</text>
</comment>
<comment type="subunit">
    <text evidence="3">Monomer.</text>
</comment>
<comment type="subcellular location">
    <subcellularLocation>
        <location evidence="3">Membrane</location>
        <topology evidence="3">Lipid-anchor</topology>
    </subcellularLocation>
    <subcellularLocation>
        <location evidence="2">Cell membrane</location>
        <topology evidence="3">Lipid-anchor</topology>
        <orientation evidence="3">Cytoplasmic side</orientation>
    </subcellularLocation>
    <subcellularLocation>
        <location evidence="3">Parasitophorous vacuole membrane</location>
        <topology evidence="3">Lipid-anchor</topology>
    </subcellularLocation>
    <subcellularLocation>
        <location evidence="1">Cytoplasm</location>
    </subcellularLocation>
    <subcellularLocation>
        <location evidence="1">Cell projection</location>
        <location evidence="1">Cilium</location>
        <location evidence="1">Flagellum</location>
    </subcellularLocation>
    <subcellularLocation>
        <location evidence="3">Host cell membrane</location>
        <topology evidence="3">Lipid-anchor</topology>
    </subcellularLocation>
    <text evidence="3">Calcium and/or autophosphorylation does not affect membrane localization.</text>
</comment>
<comment type="domain">
    <text evidence="3">The junction domain (J domain) is composed of 2 motifs that maintain the kinase inactive. The N-terminal autoinhibitory motif acts as a pseudosubstrate inhibiting the catalytic domain while the C-terminal motif binds the EF-hand domains.</text>
</comment>
<comment type="PTM">
    <text evidence="3">Myristoylated. Myristoylation and palmitoylation are required for the localization to the parasitophorous vacuole membrane.</text>
</comment>
<comment type="PTM">
    <text evidence="3">Palmitoylated. Palmitoylation increases in merozoites in response to low level of extracellular K(+) in the host blood. Myristoylation and palmitoylation are required for the localization to the parasitophorous vacuole membrane.</text>
</comment>
<comment type="PTM">
    <text evidence="3">Phosphorylation at Thr-230 may regulate CDPK1 kinase activity. Phosphorylation increases in response to an increase in intracellular Ca(2+) levels. Autophosphorylated in vitro. Autophosphorylation does not affect membrane localization in vitro.</text>
</comment>
<comment type="similarity">
    <text evidence="4">Belongs to the protein kinase superfamily. Ser/Thr protein kinase family. CDPK subfamily.</text>
</comment>
<feature type="initiator methionine" description="Removed" evidence="3">
    <location>
        <position position="1"/>
    </location>
</feature>
<feature type="chain" id="PRO_0000085836" description="Calcium-dependent protein kinase 1">
    <location>
        <begin position="2"/>
        <end position="535"/>
    </location>
</feature>
<feature type="domain" description="Protein kinase" evidence="4">
    <location>
        <begin position="57"/>
        <end position="324"/>
    </location>
</feature>
<feature type="domain" description="EF-hand 1" evidence="5">
    <location>
        <begin position="371"/>
        <end position="406"/>
    </location>
</feature>
<feature type="domain" description="EF-hand 2" evidence="5">
    <location>
        <begin position="415"/>
        <end position="450"/>
    </location>
</feature>
<feature type="domain" description="EF-hand 3" evidence="5">
    <location>
        <begin position="451"/>
        <end position="486"/>
    </location>
</feature>
<feature type="domain" description="EF-hand 4" evidence="5">
    <location>
        <begin position="497"/>
        <end position="532"/>
    </location>
</feature>
<feature type="region of interest" description="Disordered" evidence="7">
    <location>
        <begin position="1"/>
        <end position="34"/>
    </location>
</feature>
<feature type="region of interest" description="J domain" evidence="3">
    <location>
        <begin position="345"/>
        <end position="363"/>
    </location>
</feature>
<feature type="short sequence motif" description="J domain autoinhibitory motif" evidence="3">
    <location>
        <begin position="345"/>
        <end position="352"/>
    </location>
</feature>
<feature type="short sequence motif" description="J domain interacts with the EF-hand domains" evidence="3">
    <location>
        <begin position="353"/>
        <end position="363"/>
    </location>
</feature>
<feature type="active site" description="Proton acceptor" evidence="4 6">
    <location>
        <position position="190"/>
    </location>
</feature>
<feature type="binding site" evidence="4">
    <location>
        <begin position="63"/>
        <end position="71"/>
    </location>
    <ligand>
        <name>ATP</name>
        <dbReference type="ChEBI" id="CHEBI:30616"/>
    </ligand>
</feature>
<feature type="binding site" evidence="4">
    <location>
        <position position="86"/>
    </location>
    <ligand>
        <name>ATP</name>
        <dbReference type="ChEBI" id="CHEBI:30616"/>
    </ligand>
</feature>
<feature type="binding site" evidence="5">
    <location>
        <position position="384"/>
    </location>
    <ligand>
        <name>Ca(2+)</name>
        <dbReference type="ChEBI" id="CHEBI:29108"/>
        <label>1</label>
    </ligand>
</feature>
<feature type="binding site" evidence="5">
    <location>
        <position position="386"/>
    </location>
    <ligand>
        <name>Ca(2+)</name>
        <dbReference type="ChEBI" id="CHEBI:29108"/>
        <label>1</label>
    </ligand>
</feature>
<feature type="binding site" evidence="5">
    <location>
        <position position="388"/>
    </location>
    <ligand>
        <name>Ca(2+)</name>
        <dbReference type="ChEBI" id="CHEBI:29108"/>
        <label>1</label>
    </ligand>
</feature>
<feature type="binding site" evidence="5">
    <location>
        <position position="390"/>
    </location>
    <ligand>
        <name>Ca(2+)</name>
        <dbReference type="ChEBI" id="CHEBI:29108"/>
        <label>1</label>
    </ligand>
</feature>
<feature type="binding site" evidence="5">
    <location>
        <position position="395"/>
    </location>
    <ligand>
        <name>Ca(2+)</name>
        <dbReference type="ChEBI" id="CHEBI:29108"/>
        <label>1</label>
    </ligand>
</feature>
<feature type="binding site" evidence="5">
    <location>
        <position position="428"/>
    </location>
    <ligand>
        <name>Ca(2+)</name>
        <dbReference type="ChEBI" id="CHEBI:29108"/>
        <label>2</label>
    </ligand>
</feature>
<feature type="binding site" evidence="5">
    <location>
        <position position="430"/>
    </location>
    <ligand>
        <name>Ca(2+)</name>
        <dbReference type="ChEBI" id="CHEBI:29108"/>
        <label>2</label>
    </ligand>
</feature>
<feature type="binding site" evidence="5">
    <location>
        <position position="432"/>
    </location>
    <ligand>
        <name>Ca(2+)</name>
        <dbReference type="ChEBI" id="CHEBI:29108"/>
        <label>2</label>
    </ligand>
</feature>
<feature type="binding site" evidence="5">
    <location>
        <position position="434"/>
    </location>
    <ligand>
        <name>Ca(2+)</name>
        <dbReference type="ChEBI" id="CHEBI:29108"/>
        <label>2</label>
    </ligand>
</feature>
<feature type="binding site" evidence="5">
    <location>
        <position position="439"/>
    </location>
    <ligand>
        <name>Ca(2+)</name>
        <dbReference type="ChEBI" id="CHEBI:29108"/>
        <label>2</label>
    </ligand>
</feature>
<feature type="binding site" evidence="5">
    <location>
        <position position="464"/>
    </location>
    <ligand>
        <name>Ca(2+)</name>
        <dbReference type="ChEBI" id="CHEBI:29108"/>
        <label>3</label>
    </ligand>
</feature>
<feature type="binding site" evidence="5">
    <location>
        <position position="466"/>
    </location>
    <ligand>
        <name>Ca(2+)</name>
        <dbReference type="ChEBI" id="CHEBI:29108"/>
        <label>3</label>
    </ligand>
</feature>
<feature type="binding site" evidence="5">
    <location>
        <position position="468"/>
    </location>
    <ligand>
        <name>Ca(2+)</name>
        <dbReference type="ChEBI" id="CHEBI:29108"/>
        <label>3</label>
    </ligand>
</feature>
<feature type="binding site" evidence="5">
    <location>
        <position position="470"/>
    </location>
    <ligand>
        <name>Ca(2+)</name>
        <dbReference type="ChEBI" id="CHEBI:29108"/>
        <label>3</label>
    </ligand>
</feature>
<feature type="binding site" evidence="5">
    <location>
        <position position="475"/>
    </location>
    <ligand>
        <name>Ca(2+)</name>
        <dbReference type="ChEBI" id="CHEBI:29108"/>
        <label>3</label>
    </ligand>
</feature>
<feature type="binding site" evidence="5">
    <location>
        <position position="510"/>
    </location>
    <ligand>
        <name>Ca(2+)</name>
        <dbReference type="ChEBI" id="CHEBI:29108"/>
        <label>4</label>
    </ligand>
</feature>
<feature type="binding site" evidence="5">
    <location>
        <position position="512"/>
    </location>
    <ligand>
        <name>Ca(2+)</name>
        <dbReference type="ChEBI" id="CHEBI:29108"/>
        <label>4</label>
    </ligand>
</feature>
<feature type="binding site" evidence="5">
    <location>
        <position position="514"/>
    </location>
    <ligand>
        <name>Ca(2+)</name>
        <dbReference type="ChEBI" id="CHEBI:29108"/>
        <label>4</label>
    </ligand>
</feature>
<feature type="binding site" evidence="5">
    <location>
        <position position="516"/>
    </location>
    <ligand>
        <name>Ca(2+)</name>
        <dbReference type="ChEBI" id="CHEBI:29108"/>
        <label>4</label>
    </ligand>
</feature>
<feature type="binding site" evidence="5">
    <location>
        <position position="521"/>
    </location>
    <ligand>
        <name>Ca(2+)</name>
        <dbReference type="ChEBI" id="CHEBI:29108"/>
        <label>4</label>
    </ligand>
</feature>
<feature type="modified residue" description="Phosphoserine" evidence="3">
    <location>
        <position position="65"/>
    </location>
</feature>
<feature type="modified residue" description="Phosphoserine" evidence="3">
    <location>
        <position position="117"/>
    </location>
</feature>
<feature type="modified residue" description="Phosphoserine" evidence="3">
    <location>
        <position position="216"/>
    </location>
</feature>
<feature type="modified residue" description="Phosphoserine" evidence="3">
    <location>
        <position position="219"/>
    </location>
</feature>
<feature type="modified residue" description="Phosphothreonine" evidence="3">
    <location>
        <position position="230"/>
    </location>
</feature>
<feature type="modified residue" description="Phosphoserine" evidence="3">
    <location>
        <position position="334"/>
    </location>
</feature>
<feature type="lipid moiety-binding region" description="N-myristoyl glycine" evidence="3">
    <location>
        <position position="2"/>
    </location>
</feature>
<feature type="lipid moiety-binding region" description="S-palmitoyl cysteine" evidence="3">
    <location>
        <position position="3"/>
    </location>
</feature>
<dbReference type="EC" id="2.7.11.1" evidence="3"/>
<dbReference type="EMBL" id="AABL01002214">
    <property type="protein sequence ID" value="EAA18754.1"/>
    <property type="molecule type" value="Genomic_DNA"/>
</dbReference>
<dbReference type="SMR" id="Q7RAH3"/>
<dbReference type="FunCoup" id="Q7RAH3">
    <property type="interactions" value="3"/>
</dbReference>
<dbReference type="STRING" id="73239.Q7RAH3"/>
<dbReference type="PaxDb" id="73239-Q7RAH3"/>
<dbReference type="EnsemblProtists" id="EAA18754">
    <property type="protein sequence ID" value="EAA18754"/>
    <property type="gene ID" value="EAA18754"/>
</dbReference>
<dbReference type="InParanoid" id="Q7RAH3"/>
<dbReference type="Proteomes" id="UP000008553">
    <property type="component" value="Unassembled WGS sequence"/>
</dbReference>
<dbReference type="GO" id="GO:0005737">
    <property type="term" value="C:cytoplasm"/>
    <property type="evidence" value="ECO:0007669"/>
    <property type="project" value="UniProtKB-SubCell"/>
</dbReference>
<dbReference type="GO" id="GO:0020002">
    <property type="term" value="C:host cell plasma membrane"/>
    <property type="evidence" value="ECO:0007669"/>
    <property type="project" value="UniProtKB-SubCell"/>
</dbReference>
<dbReference type="GO" id="GO:0031514">
    <property type="term" value="C:motile cilium"/>
    <property type="evidence" value="ECO:0007669"/>
    <property type="project" value="UniProtKB-SubCell"/>
</dbReference>
<dbReference type="GO" id="GO:0005886">
    <property type="term" value="C:plasma membrane"/>
    <property type="evidence" value="ECO:0007669"/>
    <property type="project" value="UniProtKB-SubCell"/>
</dbReference>
<dbReference type="GO" id="GO:0020005">
    <property type="term" value="C:symbiont-containing vacuole membrane"/>
    <property type="evidence" value="ECO:0007669"/>
    <property type="project" value="UniProtKB-SubCell"/>
</dbReference>
<dbReference type="GO" id="GO:0005524">
    <property type="term" value="F:ATP binding"/>
    <property type="evidence" value="ECO:0007669"/>
    <property type="project" value="UniProtKB-KW"/>
</dbReference>
<dbReference type="GO" id="GO:0005509">
    <property type="term" value="F:calcium ion binding"/>
    <property type="evidence" value="ECO:0007669"/>
    <property type="project" value="InterPro"/>
</dbReference>
<dbReference type="GO" id="GO:0106310">
    <property type="term" value="F:protein serine kinase activity"/>
    <property type="evidence" value="ECO:0007669"/>
    <property type="project" value="RHEA"/>
</dbReference>
<dbReference type="GO" id="GO:0004674">
    <property type="term" value="F:protein serine/threonine kinase activity"/>
    <property type="evidence" value="ECO:0007669"/>
    <property type="project" value="UniProtKB-KW"/>
</dbReference>
<dbReference type="CDD" id="cd00051">
    <property type="entry name" value="EFh"/>
    <property type="match status" value="2"/>
</dbReference>
<dbReference type="CDD" id="cd05117">
    <property type="entry name" value="STKc_CAMK"/>
    <property type="match status" value="1"/>
</dbReference>
<dbReference type="FunFam" id="1.10.510.10:FF:000398">
    <property type="entry name" value="Calcium-dependent protein kinase 1"/>
    <property type="match status" value="1"/>
</dbReference>
<dbReference type="FunFam" id="3.30.200.20:FF:000315">
    <property type="entry name" value="Calcium-dependent protein kinase 3"/>
    <property type="match status" value="1"/>
</dbReference>
<dbReference type="FunFam" id="1.10.238.10:FF:000003">
    <property type="entry name" value="Calmodulin A"/>
    <property type="match status" value="1"/>
</dbReference>
<dbReference type="Gene3D" id="1.10.238.10">
    <property type="entry name" value="EF-hand"/>
    <property type="match status" value="2"/>
</dbReference>
<dbReference type="Gene3D" id="3.30.200.20">
    <property type="entry name" value="Phosphorylase Kinase, domain 1"/>
    <property type="match status" value="1"/>
</dbReference>
<dbReference type="Gene3D" id="1.10.510.10">
    <property type="entry name" value="Transferase(Phosphotransferase) domain 1"/>
    <property type="match status" value="1"/>
</dbReference>
<dbReference type="InterPro" id="IPR050205">
    <property type="entry name" value="CDPK_Ser/Thr_kinases"/>
</dbReference>
<dbReference type="InterPro" id="IPR011992">
    <property type="entry name" value="EF-hand-dom_pair"/>
</dbReference>
<dbReference type="InterPro" id="IPR018247">
    <property type="entry name" value="EF_Hand_1_Ca_BS"/>
</dbReference>
<dbReference type="InterPro" id="IPR002048">
    <property type="entry name" value="EF_hand_dom"/>
</dbReference>
<dbReference type="InterPro" id="IPR011009">
    <property type="entry name" value="Kinase-like_dom_sf"/>
</dbReference>
<dbReference type="InterPro" id="IPR000719">
    <property type="entry name" value="Prot_kinase_dom"/>
</dbReference>
<dbReference type="InterPro" id="IPR017441">
    <property type="entry name" value="Protein_kinase_ATP_BS"/>
</dbReference>
<dbReference type="InterPro" id="IPR008271">
    <property type="entry name" value="Ser/Thr_kinase_AS"/>
</dbReference>
<dbReference type="PANTHER" id="PTHR24349">
    <property type="entry name" value="SERINE/THREONINE-PROTEIN KINASE"/>
    <property type="match status" value="1"/>
</dbReference>
<dbReference type="Pfam" id="PF13499">
    <property type="entry name" value="EF-hand_7"/>
    <property type="match status" value="2"/>
</dbReference>
<dbReference type="Pfam" id="PF00069">
    <property type="entry name" value="Pkinase"/>
    <property type="match status" value="1"/>
</dbReference>
<dbReference type="SMART" id="SM00054">
    <property type="entry name" value="EFh"/>
    <property type="match status" value="4"/>
</dbReference>
<dbReference type="SMART" id="SM00220">
    <property type="entry name" value="S_TKc"/>
    <property type="match status" value="1"/>
</dbReference>
<dbReference type="SUPFAM" id="SSF47473">
    <property type="entry name" value="EF-hand"/>
    <property type="match status" value="1"/>
</dbReference>
<dbReference type="SUPFAM" id="SSF56112">
    <property type="entry name" value="Protein kinase-like (PK-like)"/>
    <property type="match status" value="1"/>
</dbReference>
<dbReference type="PROSITE" id="PS00018">
    <property type="entry name" value="EF_HAND_1"/>
    <property type="match status" value="4"/>
</dbReference>
<dbReference type="PROSITE" id="PS50222">
    <property type="entry name" value="EF_HAND_2"/>
    <property type="match status" value="4"/>
</dbReference>
<dbReference type="PROSITE" id="PS00107">
    <property type="entry name" value="PROTEIN_KINASE_ATP"/>
    <property type="match status" value="1"/>
</dbReference>
<dbReference type="PROSITE" id="PS50011">
    <property type="entry name" value="PROTEIN_KINASE_DOM"/>
    <property type="match status" value="1"/>
</dbReference>
<dbReference type="PROSITE" id="PS00108">
    <property type="entry name" value="PROTEIN_KINASE_ST"/>
    <property type="match status" value="1"/>
</dbReference>
<name>CDPK1_PLAYO</name>
<accession>Q7RAH3</accession>
<keyword id="KW-0067">ATP-binding</keyword>
<keyword id="KW-0106">Calcium</keyword>
<keyword id="KW-1003">Cell membrane</keyword>
<keyword id="KW-0966">Cell projection</keyword>
<keyword id="KW-0969">Cilium</keyword>
<keyword id="KW-0963">Cytoplasm</keyword>
<keyword id="KW-0282">Flagellum</keyword>
<keyword id="KW-1032">Host cell membrane</keyword>
<keyword id="KW-1043">Host membrane</keyword>
<keyword id="KW-0418">Kinase</keyword>
<keyword id="KW-0449">Lipoprotein</keyword>
<keyword id="KW-0472">Membrane</keyword>
<keyword id="KW-0479">Metal-binding</keyword>
<keyword id="KW-0519">Myristate</keyword>
<keyword id="KW-0547">Nucleotide-binding</keyword>
<keyword id="KW-0564">Palmitate</keyword>
<keyword id="KW-0597">Phosphoprotein</keyword>
<keyword id="KW-1185">Reference proteome</keyword>
<keyword id="KW-0677">Repeat</keyword>
<keyword id="KW-0723">Serine/threonine-protein kinase</keyword>
<keyword id="KW-0808">Transferase</keyword>
<protein>
    <recommendedName>
        <fullName>Calcium-dependent protein kinase 1</fullName>
        <ecNumber evidence="3">2.7.11.1</ecNumber>
    </recommendedName>
</protein>